<comment type="catalytic activity">
    <reaction evidence="2">
        <text>(S)-muconolactone = (4,5-dihydro-5-oxofuran-2-yl)-acetate</text>
        <dbReference type="Rhea" id="RHEA:12348"/>
        <dbReference type="ChEBI" id="CHEBI:58425"/>
        <dbReference type="ChEBI" id="CHEBI:58736"/>
        <dbReference type="EC" id="5.3.3.4"/>
    </reaction>
</comment>
<comment type="pathway">
    <text>Aromatic compound metabolism; beta-ketoadipate pathway; 5-oxo-4,5-dihydro-2-furylacetate from catechol: step 3/3.</text>
</comment>
<comment type="subunit">
    <text evidence="1">Homodecamer.</text>
</comment>
<comment type="similarity">
    <text evidence="3">Belongs to the muconolactone Delta-isomerase family.</text>
</comment>
<proteinExistence type="inferred from homology"/>
<accession>Q9I0X4</accession>
<protein>
    <recommendedName>
        <fullName>Muconolactone Delta-isomerase</fullName>
        <shortName>MIase</shortName>
        <ecNumber evidence="2">5.3.3.4</ecNumber>
    </recommendedName>
</protein>
<reference key="1">
    <citation type="journal article" date="2000" name="Nature">
        <title>Complete genome sequence of Pseudomonas aeruginosa PAO1, an opportunistic pathogen.</title>
        <authorList>
            <person name="Stover C.K."/>
            <person name="Pham X.-Q.T."/>
            <person name="Erwin A.L."/>
            <person name="Mizoguchi S.D."/>
            <person name="Warrener P."/>
            <person name="Hickey M.J."/>
            <person name="Brinkman F.S.L."/>
            <person name="Hufnagle W.O."/>
            <person name="Kowalik D.J."/>
            <person name="Lagrou M."/>
            <person name="Garber R.L."/>
            <person name="Goltry L."/>
            <person name="Tolentino E."/>
            <person name="Westbrock-Wadman S."/>
            <person name="Yuan Y."/>
            <person name="Brody L.L."/>
            <person name="Coulter S.N."/>
            <person name="Folger K.R."/>
            <person name="Kas A."/>
            <person name="Larbig K."/>
            <person name="Lim R.M."/>
            <person name="Smith K.A."/>
            <person name="Spencer D.H."/>
            <person name="Wong G.K.-S."/>
            <person name="Wu Z."/>
            <person name="Paulsen I.T."/>
            <person name="Reizer J."/>
            <person name="Saier M.H. Jr."/>
            <person name="Hancock R.E.W."/>
            <person name="Lory S."/>
            <person name="Olson M.V."/>
        </authorList>
    </citation>
    <scope>NUCLEOTIDE SEQUENCE [LARGE SCALE GENOMIC DNA]</scope>
    <source>
        <strain>ATCC 15692 / DSM 22644 / CIP 104116 / JCM 14847 / LMG 12228 / 1C / PRS 101 / PAO1</strain>
    </source>
</reference>
<evidence type="ECO:0000250" key="1"/>
<evidence type="ECO:0000250" key="2">
    <source>
        <dbReference type="UniProtKB" id="P00948"/>
    </source>
</evidence>
<evidence type="ECO:0000305" key="3"/>
<sequence>MLFHVKMTVKLPVDMDPQQAERLKAEEKEMAQRLQREGSWRHLWRIAGHYANYSLFDLPSVEALHDTLTRLPLFPYMDIEIDGLCRHPSSIHADDR</sequence>
<name>CATC_PSEAE</name>
<organism>
    <name type="scientific">Pseudomonas aeruginosa (strain ATCC 15692 / DSM 22644 / CIP 104116 / JCM 14847 / LMG 12228 / 1C / PRS 101 / PAO1)</name>
    <dbReference type="NCBI Taxonomy" id="208964"/>
    <lineage>
        <taxon>Bacteria</taxon>
        <taxon>Pseudomonadati</taxon>
        <taxon>Pseudomonadota</taxon>
        <taxon>Gammaproteobacteria</taxon>
        <taxon>Pseudomonadales</taxon>
        <taxon>Pseudomonadaceae</taxon>
        <taxon>Pseudomonas</taxon>
    </lineage>
</organism>
<keyword id="KW-0058">Aromatic hydrocarbons catabolism</keyword>
<keyword id="KW-0413">Isomerase</keyword>
<keyword id="KW-1185">Reference proteome</keyword>
<feature type="chain" id="PRO_0000287786" description="Muconolactone Delta-isomerase">
    <location>
        <begin position="1"/>
        <end position="96"/>
    </location>
</feature>
<dbReference type="EC" id="5.3.3.4" evidence="2"/>
<dbReference type="EMBL" id="AE004091">
    <property type="protein sequence ID" value="AAG05896.1"/>
    <property type="molecule type" value="Genomic_DNA"/>
</dbReference>
<dbReference type="PIR" id="C83331">
    <property type="entry name" value="C83331"/>
</dbReference>
<dbReference type="RefSeq" id="NP_251198.1">
    <property type="nucleotide sequence ID" value="NC_002516.2"/>
</dbReference>
<dbReference type="RefSeq" id="WP_003089864.1">
    <property type="nucleotide sequence ID" value="NZ_QZGE01000008.1"/>
</dbReference>
<dbReference type="SMR" id="Q9I0X4"/>
<dbReference type="STRING" id="208964.PA2508"/>
<dbReference type="PaxDb" id="208964-PA2508"/>
<dbReference type="GeneID" id="882967"/>
<dbReference type="KEGG" id="pae:PA2508"/>
<dbReference type="PATRIC" id="fig|208964.12.peg.2620"/>
<dbReference type="PseudoCAP" id="PA2508"/>
<dbReference type="HOGENOM" id="CLU_080702_2_0_6"/>
<dbReference type="InParanoid" id="Q9I0X4"/>
<dbReference type="OrthoDB" id="2889526at2"/>
<dbReference type="PhylomeDB" id="Q9I0X4"/>
<dbReference type="BioCyc" id="PAER208964:G1FZ6-2543-MONOMER"/>
<dbReference type="UniPathway" id="UPA00157">
    <property type="reaction ID" value="UER00260"/>
</dbReference>
<dbReference type="Proteomes" id="UP000002438">
    <property type="component" value="Chromosome"/>
</dbReference>
<dbReference type="GO" id="GO:0016159">
    <property type="term" value="F:muconolactone delta-isomerase activity"/>
    <property type="evidence" value="ECO:0007669"/>
    <property type="project" value="UniProtKB-EC"/>
</dbReference>
<dbReference type="GO" id="GO:0042952">
    <property type="term" value="P:beta-ketoadipate pathway"/>
    <property type="evidence" value="ECO:0007669"/>
    <property type="project" value="UniProtKB-UniPathway"/>
</dbReference>
<dbReference type="Gene3D" id="3.30.70.1060">
    <property type="entry name" value="Dimeric alpha+beta barrel"/>
    <property type="match status" value="1"/>
</dbReference>
<dbReference type="InterPro" id="IPR011008">
    <property type="entry name" value="Dimeric_a/b-barrel"/>
</dbReference>
<dbReference type="InterPro" id="IPR026029">
    <property type="entry name" value="MLI_dom"/>
</dbReference>
<dbReference type="InterPro" id="IPR003464">
    <property type="entry name" value="Muconolactone_d_Isoase"/>
</dbReference>
<dbReference type="NCBIfam" id="TIGR03221">
    <property type="entry name" value="muco_delta"/>
    <property type="match status" value="1"/>
</dbReference>
<dbReference type="Pfam" id="PF02426">
    <property type="entry name" value="MIase"/>
    <property type="match status" value="1"/>
</dbReference>
<dbReference type="PIRSF" id="PIRSF001486">
    <property type="entry name" value="CatC"/>
    <property type="match status" value="1"/>
</dbReference>
<dbReference type="SUPFAM" id="SSF54909">
    <property type="entry name" value="Dimeric alpha+beta barrel"/>
    <property type="match status" value="1"/>
</dbReference>
<gene>
    <name type="primary">catC</name>
    <name type="ordered locus">PA2508</name>
</gene>